<keyword id="KW-0106">Calcium</keyword>
<keyword id="KW-0479">Metal-binding</keyword>
<keyword id="KW-1185">Reference proteome</keyword>
<keyword id="KW-0677">Repeat</keyword>
<name>CML28_ORYSJ</name>
<evidence type="ECO:0000250" key="1"/>
<evidence type="ECO:0000255" key="2">
    <source>
        <dbReference type="PROSITE-ProRule" id="PRU00448"/>
    </source>
</evidence>
<evidence type="ECO:0000305" key="3"/>
<comment type="function">
    <text evidence="1">Potential calcium sensor.</text>
</comment>
<comment type="caution">
    <text evidence="3">Although assigned as a calmodulin family member by PubMed:17263873, it only contains EF-hand domains.</text>
</comment>
<comment type="sequence caution" evidence="3">
    <conflict type="erroneous initiation">
        <sequence resource="EMBL-CDS" id="BAF29459"/>
    </conflict>
</comment>
<reference key="1">
    <citation type="journal article" date="2005" name="BMC Biol.">
        <title>The sequence of rice chromosomes 11 and 12, rich in disease resistance genes and recent gene duplications.</title>
        <authorList>
            <consortium name="The rice chromosomes 11 and 12 sequencing consortia"/>
        </authorList>
    </citation>
    <scope>NUCLEOTIDE SEQUENCE [LARGE SCALE GENOMIC DNA]</scope>
    <source>
        <strain>cv. Nipponbare</strain>
    </source>
</reference>
<reference key="2">
    <citation type="journal article" date="2005" name="Nature">
        <title>The map-based sequence of the rice genome.</title>
        <authorList>
            <consortium name="International rice genome sequencing project (IRGSP)"/>
        </authorList>
    </citation>
    <scope>NUCLEOTIDE SEQUENCE [LARGE SCALE GENOMIC DNA]</scope>
    <source>
        <strain>cv. Nipponbare</strain>
    </source>
</reference>
<reference key="3">
    <citation type="journal article" date="2008" name="Nucleic Acids Res.">
        <title>The rice annotation project database (RAP-DB): 2008 update.</title>
        <authorList>
            <consortium name="The rice annotation project (RAP)"/>
        </authorList>
    </citation>
    <scope>GENOME REANNOTATION</scope>
    <source>
        <strain>cv. Nipponbare</strain>
    </source>
</reference>
<reference key="4">
    <citation type="journal article" date="2013" name="Rice">
        <title>Improvement of the Oryza sativa Nipponbare reference genome using next generation sequence and optical map data.</title>
        <authorList>
            <person name="Kawahara Y."/>
            <person name="de la Bastide M."/>
            <person name="Hamilton J.P."/>
            <person name="Kanamori H."/>
            <person name="McCombie W.R."/>
            <person name="Ouyang S."/>
            <person name="Schwartz D.C."/>
            <person name="Tanaka T."/>
            <person name="Wu J."/>
            <person name="Zhou S."/>
            <person name="Childs K.L."/>
            <person name="Davidson R.M."/>
            <person name="Lin H."/>
            <person name="Quesada-Ocampo L."/>
            <person name="Vaillancourt B."/>
            <person name="Sakai H."/>
            <person name="Lee S.S."/>
            <person name="Kim J."/>
            <person name="Numa H."/>
            <person name="Itoh T."/>
            <person name="Buell C.R."/>
            <person name="Matsumoto T."/>
        </authorList>
    </citation>
    <scope>GENOME REANNOTATION</scope>
    <source>
        <strain>cv. Nipponbare</strain>
    </source>
</reference>
<reference key="5">
    <citation type="journal article" date="2003" name="Science">
        <title>Collection, mapping, and annotation of over 28,000 cDNA clones from japonica rice.</title>
        <authorList>
            <consortium name="The rice full-length cDNA consortium"/>
        </authorList>
    </citation>
    <scope>NUCLEOTIDE SEQUENCE [LARGE SCALE MRNA] OF 5-172</scope>
    <source>
        <strain>cv. Nipponbare</strain>
    </source>
</reference>
<reference key="6">
    <citation type="journal article" date="2007" name="BMC Plant Biol.">
        <title>Genome-wide identification and analyses of the rice calmodulin and related potential calcium sensor proteins.</title>
        <authorList>
            <person name="Boonburapong B."/>
            <person name="Buaboocha T."/>
        </authorList>
    </citation>
    <scope>GENE FAMILY</scope>
    <scope>NOMENCLATURE</scope>
</reference>
<feature type="chain" id="PRO_0000338442" description="Probable calcium-binding protein CML28">
    <location>
        <begin position="1"/>
        <end position="172"/>
    </location>
</feature>
<feature type="domain" description="EF-hand 1" evidence="2">
    <location>
        <begin position="1"/>
        <end position="36"/>
    </location>
</feature>
<feature type="domain" description="EF-hand 2" evidence="2">
    <location>
        <begin position="37"/>
        <end position="72"/>
    </location>
</feature>
<feature type="domain" description="EF-hand 3" evidence="2">
    <location>
        <begin position="95"/>
        <end position="130"/>
    </location>
</feature>
<feature type="domain" description="EF-hand 4" evidence="2">
    <location>
        <begin position="133"/>
        <end position="168"/>
    </location>
</feature>
<feature type="binding site" evidence="2">
    <location>
        <position position="14"/>
    </location>
    <ligand>
        <name>Ca(2+)</name>
        <dbReference type="ChEBI" id="CHEBI:29108"/>
        <label>1</label>
    </ligand>
</feature>
<feature type="binding site" evidence="2">
    <location>
        <position position="16"/>
    </location>
    <ligand>
        <name>Ca(2+)</name>
        <dbReference type="ChEBI" id="CHEBI:29108"/>
        <label>1</label>
    </ligand>
</feature>
<feature type="binding site" evidence="2">
    <location>
        <position position="18"/>
    </location>
    <ligand>
        <name>Ca(2+)</name>
        <dbReference type="ChEBI" id="CHEBI:29108"/>
        <label>1</label>
    </ligand>
</feature>
<feature type="binding site" evidence="2">
    <location>
        <position position="20"/>
    </location>
    <ligand>
        <name>Ca(2+)</name>
        <dbReference type="ChEBI" id="CHEBI:29108"/>
        <label>1</label>
    </ligand>
</feature>
<feature type="binding site" evidence="2">
    <location>
        <position position="25"/>
    </location>
    <ligand>
        <name>Ca(2+)</name>
        <dbReference type="ChEBI" id="CHEBI:29108"/>
        <label>1</label>
    </ligand>
</feature>
<feature type="binding site" evidence="2">
    <location>
        <position position="50"/>
    </location>
    <ligand>
        <name>Ca(2+)</name>
        <dbReference type="ChEBI" id="CHEBI:29108"/>
        <label>2</label>
    </ligand>
</feature>
<feature type="binding site" evidence="2">
    <location>
        <position position="52"/>
    </location>
    <ligand>
        <name>Ca(2+)</name>
        <dbReference type="ChEBI" id="CHEBI:29108"/>
        <label>2</label>
    </ligand>
</feature>
<feature type="binding site" evidence="2">
    <location>
        <position position="54"/>
    </location>
    <ligand>
        <name>Ca(2+)</name>
        <dbReference type="ChEBI" id="CHEBI:29108"/>
        <label>2</label>
    </ligand>
</feature>
<feature type="binding site" evidence="2">
    <location>
        <position position="56"/>
    </location>
    <ligand>
        <name>Ca(2+)</name>
        <dbReference type="ChEBI" id="CHEBI:29108"/>
        <label>2</label>
    </ligand>
</feature>
<feature type="binding site" evidence="2">
    <location>
        <position position="61"/>
    </location>
    <ligand>
        <name>Ca(2+)</name>
        <dbReference type="ChEBI" id="CHEBI:29108"/>
        <label>2</label>
    </ligand>
</feature>
<feature type="binding site" evidence="2">
    <location>
        <position position="108"/>
    </location>
    <ligand>
        <name>Ca(2+)</name>
        <dbReference type="ChEBI" id="CHEBI:29108"/>
        <label>3</label>
    </ligand>
</feature>
<feature type="binding site" evidence="2">
    <location>
        <position position="110"/>
    </location>
    <ligand>
        <name>Ca(2+)</name>
        <dbReference type="ChEBI" id="CHEBI:29108"/>
        <label>3</label>
    </ligand>
</feature>
<feature type="binding site" evidence="2">
    <location>
        <position position="112"/>
    </location>
    <ligand>
        <name>Ca(2+)</name>
        <dbReference type="ChEBI" id="CHEBI:29108"/>
        <label>3</label>
    </ligand>
</feature>
<feature type="binding site" evidence="2">
    <location>
        <position position="119"/>
    </location>
    <ligand>
        <name>Ca(2+)</name>
        <dbReference type="ChEBI" id="CHEBI:29108"/>
        <label>3</label>
    </ligand>
</feature>
<feature type="binding site" evidence="2">
    <location>
        <position position="146"/>
    </location>
    <ligand>
        <name>Ca(2+)</name>
        <dbReference type="ChEBI" id="CHEBI:29108"/>
        <label>4</label>
    </ligand>
</feature>
<feature type="binding site" evidence="2">
    <location>
        <position position="148"/>
    </location>
    <ligand>
        <name>Ca(2+)</name>
        <dbReference type="ChEBI" id="CHEBI:29108"/>
        <label>4</label>
    </ligand>
</feature>
<feature type="binding site" evidence="2">
    <location>
        <position position="150"/>
    </location>
    <ligand>
        <name>Ca(2+)</name>
        <dbReference type="ChEBI" id="CHEBI:29108"/>
        <label>4</label>
    </ligand>
</feature>
<feature type="binding site" evidence="2">
    <location>
        <position position="152"/>
    </location>
    <ligand>
        <name>Ca(2+)</name>
        <dbReference type="ChEBI" id="CHEBI:29108"/>
        <label>4</label>
    </ligand>
</feature>
<feature type="binding site" evidence="2">
    <location>
        <position position="157"/>
    </location>
    <ligand>
        <name>Ca(2+)</name>
        <dbReference type="ChEBI" id="CHEBI:29108"/>
        <label>4</label>
    </ligand>
</feature>
<protein>
    <recommendedName>
        <fullName>Probable calcium-binding protein CML28</fullName>
    </recommendedName>
    <alternativeName>
        <fullName>Calmodulin-like protein 28</fullName>
    </alternativeName>
</protein>
<organism>
    <name type="scientific">Oryza sativa subsp. japonica</name>
    <name type="common">Rice</name>
    <dbReference type="NCBI Taxonomy" id="39947"/>
    <lineage>
        <taxon>Eukaryota</taxon>
        <taxon>Viridiplantae</taxon>
        <taxon>Streptophyta</taxon>
        <taxon>Embryophyta</taxon>
        <taxon>Tracheophyta</taxon>
        <taxon>Spermatophyta</taxon>
        <taxon>Magnoliopsida</taxon>
        <taxon>Liliopsida</taxon>
        <taxon>Poales</taxon>
        <taxon>Poaceae</taxon>
        <taxon>BOP clade</taxon>
        <taxon>Oryzoideae</taxon>
        <taxon>Oryzeae</taxon>
        <taxon>Oryzinae</taxon>
        <taxon>Oryza</taxon>
        <taxon>Oryza sativa</taxon>
    </lineage>
</organism>
<accession>Q2QVI1</accession>
<accession>Q0IPA6</accession>
<gene>
    <name type="primary">CML28</name>
    <name type="ordered locus">Os12g0228800</name>
    <name type="ordered locus">LOC_Os12g12730</name>
</gene>
<sequence length="172" mass="18578">MDSTELRKVFKMFDKNGDGRITKKELGESFKNFGIFIPDDELDATMDKIDANGDGCVDVEEFGLLYRSILGDDAAGRAPRTAAAAIGGEGGAPDDEDEGMREAFNVFDQNGDGFITVDELRSVLSSLGLKHGRTADDCRRMISMVDADGDGRVDFKEFKQMMRGGGFAALGG</sequence>
<dbReference type="EMBL" id="DP000011">
    <property type="protein sequence ID" value="ABA96836.1"/>
    <property type="molecule type" value="Genomic_DNA"/>
</dbReference>
<dbReference type="EMBL" id="AP008218">
    <property type="protein sequence ID" value="BAF29459.1"/>
    <property type="status" value="ALT_INIT"/>
    <property type="molecule type" value="Genomic_DNA"/>
</dbReference>
<dbReference type="EMBL" id="AP014968">
    <property type="status" value="NOT_ANNOTATED_CDS"/>
    <property type="molecule type" value="Genomic_DNA"/>
</dbReference>
<dbReference type="EMBL" id="AK064732">
    <property type="status" value="NOT_ANNOTATED_CDS"/>
    <property type="molecule type" value="mRNA"/>
</dbReference>
<dbReference type="SMR" id="Q2QVI1"/>
<dbReference type="FunCoup" id="Q2QVI1">
    <property type="interactions" value="1"/>
</dbReference>
<dbReference type="STRING" id="39947.Q2QVI1"/>
<dbReference type="PaxDb" id="39947-Q2QVI1"/>
<dbReference type="KEGG" id="dosa:Os12g0228800"/>
<dbReference type="eggNOG" id="KOG0027">
    <property type="taxonomic scope" value="Eukaryota"/>
</dbReference>
<dbReference type="HOGENOM" id="CLU_061288_20_3_1"/>
<dbReference type="InParanoid" id="Q2QVI1"/>
<dbReference type="Proteomes" id="UP000000763">
    <property type="component" value="Chromosome 12"/>
</dbReference>
<dbReference type="Proteomes" id="UP000059680">
    <property type="component" value="Chromosome 12"/>
</dbReference>
<dbReference type="GO" id="GO:0005509">
    <property type="term" value="F:calcium ion binding"/>
    <property type="evidence" value="ECO:0000318"/>
    <property type="project" value="GO_Central"/>
</dbReference>
<dbReference type="CDD" id="cd00051">
    <property type="entry name" value="EFh"/>
    <property type="match status" value="2"/>
</dbReference>
<dbReference type="FunFam" id="1.10.238.10:FF:000231">
    <property type="entry name" value="Calmodulin-like protein 3"/>
    <property type="match status" value="1"/>
</dbReference>
<dbReference type="FunFam" id="1.10.238.10:FF:000089">
    <property type="entry name" value="calmodulin-like protein 3"/>
    <property type="match status" value="1"/>
</dbReference>
<dbReference type="Gene3D" id="1.10.238.10">
    <property type="entry name" value="EF-hand"/>
    <property type="match status" value="2"/>
</dbReference>
<dbReference type="InterPro" id="IPR011992">
    <property type="entry name" value="EF-hand-dom_pair"/>
</dbReference>
<dbReference type="InterPro" id="IPR018247">
    <property type="entry name" value="EF_Hand_1_Ca_BS"/>
</dbReference>
<dbReference type="InterPro" id="IPR002048">
    <property type="entry name" value="EF_hand_dom"/>
</dbReference>
<dbReference type="InterPro" id="IPR039647">
    <property type="entry name" value="EF_hand_pair_protein_CML-like"/>
</dbReference>
<dbReference type="PANTHER" id="PTHR10891">
    <property type="entry name" value="EF-HAND CALCIUM-BINDING DOMAIN CONTAINING PROTEIN"/>
    <property type="match status" value="1"/>
</dbReference>
<dbReference type="Pfam" id="PF13499">
    <property type="entry name" value="EF-hand_7"/>
    <property type="match status" value="2"/>
</dbReference>
<dbReference type="SMART" id="SM00054">
    <property type="entry name" value="EFh"/>
    <property type="match status" value="4"/>
</dbReference>
<dbReference type="SUPFAM" id="SSF47473">
    <property type="entry name" value="EF-hand"/>
    <property type="match status" value="1"/>
</dbReference>
<dbReference type="PROSITE" id="PS00018">
    <property type="entry name" value="EF_HAND_1"/>
    <property type="match status" value="4"/>
</dbReference>
<dbReference type="PROSITE" id="PS50222">
    <property type="entry name" value="EF_HAND_2"/>
    <property type="match status" value="4"/>
</dbReference>
<proteinExistence type="evidence at transcript level"/>